<proteinExistence type="inferred from homology"/>
<comment type="function">
    <text evidence="1">Catalyzes the formation of N(7)-methylguanine at position 46 (m7G46) in tRNA.</text>
</comment>
<comment type="catalytic activity">
    <reaction evidence="1">
        <text>guanosine(46) in tRNA + S-adenosyl-L-methionine = N(7)-methylguanosine(46) in tRNA + S-adenosyl-L-homocysteine</text>
        <dbReference type="Rhea" id="RHEA:42708"/>
        <dbReference type="Rhea" id="RHEA-COMP:10188"/>
        <dbReference type="Rhea" id="RHEA-COMP:10189"/>
        <dbReference type="ChEBI" id="CHEBI:57856"/>
        <dbReference type="ChEBI" id="CHEBI:59789"/>
        <dbReference type="ChEBI" id="CHEBI:74269"/>
        <dbReference type="ChEBI" id="CHEBI:74480"/>
        <dbReference type="EC" id="2.1.1.33"/>
    </reaction>
</comment>
<comment type="pathway">
    <text evidence="1">tRNA modification; N(7)-methylguanine-tRNA biosynthesis.</text>
</comment>
<comment type="subcellular location">
    <subcellularLocation>
        <location evidence="1">Nucleus</location>
    </subcellularLocation>
</comment>
<comment type="similarity">
    <text evidence="1">Belongs to the class I-like SAM-binding methyltransferase superfamily. TrmB family.</text>
</comment>
<keyword id="KW-0489">Methyltransferase</keyword>
<keyword id="KW-0539">Nucleus</keyword>
<keyword id="KW-1185">Reference proteome</keyword>
<keyword id="KW-0694">RNA-binding</keyword>
<keyword id="KW-0949">S-adenosyl-L-methionine</keyword>
<keyword id="KW-0808">Transferase</keyword>
<keyword id="KW-0819">tRNA processing</keyword>
<keyword id="KW-0820">tRNA-binding</keyword>
<feature type="chain" id="PRO_0000370565" description="tRNA (guanine-N(7)-)-methyltransferase">
    <location>
        <begin position="1"/>
        <end position="235"/>
    </location>
</feature>
<feature type="active site" evidence="1">
    <location>
        <position position="139"/>
    </location>
</feature>
<feature type="binding site" evidence="1">
    <location>
        <position position="60"/>
    </location>
    <ligand>
        <name>S-adenosyl-L-methionine</name>
        <dbReference type="ChEBI" id="CHEBI:59789"/>
    </ligand>
</feature>
<feature type="binding site" evidence="1">
    <location>
        <begin position="83"/>
        <end position="84"/>
    </location>
    <ligand>
        <name>S-adenosyl-L-methionine</name>
        <dbReference type="ChEBI" id="CHEBI:59789"/>
    </ligand>
</feature>
<feature type="binding site" evidence="1">
    <location>
        <begin position="116"/>
        <end position="117"/>
    </location>
    <ligand>
        <name>S-adenosyl-L-methionine</name>
        <dbReference type="ChEBI" id="CHEBI:59789"/>
    </ligand>
</feature>
<feature type="binding site" evidence="1">
    <location>
        <position position="136"/>
    </location>
    <ligand>
        <name>S-adenosyl-L-methionine</name>
        <dbReference type="ChEBI" id="CHEBI:59789"/>
    </ligand>
</feature>
<feature type="binding site" evidence="1">
    <location>
        <begin position="214"/>
        <end position="216"/>
    </location>
    <ligand>
        <name>S-adenosyl-L-methionine</name>
        <dbReference type="ChEBI" id="CHEBI:59789"/>
    </ligand>
</feature>
<protein>
    <recommendedName>
        <fullName evidence="1">tRNA (guanine-N(7)-)-methyltransferase</fullName>
        <ecNumber evidence="1">2.1.1.33</ecNumber>
    </recommendedName>
    <alternativeName>
        <fullName evidence="1">tRNA (guanine(46)-N(7))-methyltransferase</fullName>
    </alternativeName>
    <alternativeName>
        <fullName evidence="1">tRNA(m7G46)-methyltransferase</fullName>
    </alternativeName>
</protein>
<gene>
    <name type="ORF">AGAP004752</name>
</gene>
<name>TRMB_ANOGA</name>
<organism>
    <name type="scientific">Anopheles gambiae</name>
    <name type="common">African malaria mosquito</name>
    <dbReference type="NCBI Taxonomy" id="7165"/>
    <lineage>
        <taxon>Eukaryota</taxon>
        <taxon>Metazoa</taxon>
        <taxon>Ecdysozoa</taxon>
        <taxon>Arthropoda</taxon>
        <taxon>Hexapoda</taxon>
        <taxon>Insecta</taxon>
        <taxon>Pterygota</taxon>
        <taxon>Neoptera</taxon>
        <taxon>Endopterygota</taxon>
        <taxon>Diptera</taxon>
        <taxon>Nematocera</taxon>
        <taxon>Culicoidea</taxon>
        <taxon>Culicidae</taxon>
        <taxon>Anophelinae</taxon>
        <taxon>Anopheles</taxon>
    </lineage>
</organism>
<reference key="1">
    <citation type="journal article" date="2002" name="Science">
        <title>The genome sequence of the malaria mosquito Anopheles gambiae.</title>
        <authorList>
            <person name="Holt R.A."/>
            <person name="Subramanian G.M."/>
            <person name="Halpern A."/>
            <person name="Sutton G.G."/>
            <person name="Charlab R."/>
            <person name="Nusskern D.R."/>
            <person name="Wincker P."/>
            <person name="Clark A.G."/>
            <person name="Ribeiro J.M.C."/>
            <person name="Wides R."/>
            <person name="Salzberg S.L."/>
            <person name="Loftus B.J."/>
            <person name="Yandell M.D."/>
            <person name="Majoros W.H."/>
            <person name="Rusch D.B."/>
            <person name="Lai Z."/>
            <person name="Kraft C.L."/>
            <person name="Abril J.F."/>
            <person name="Anthouard V."/>
            <person name="Arensburger P."/>
            <person name="Atkinson P.W."/>
            <person name="Baden H."/>
            <person name="de Berardinis V."/>
            <person name="Baldwin D."/>
            <person name="Benes V."/>
            <person name="Biedler J."/>
            <person name="Blass C."/>
            <person name="Bolanos R."/>
            <person name="Boscus D."/>
            <person name="Barnstead M."/>
            <person name="Cai S."/>
            <person name="Center A."/>
            <person name="Chaturverdi K."/>
            <person name="Christophides G.K."/>
            <person name="Chrystal M.A.M."/>
            <person name="Clamp M."/>
            <person name="Cravchik A."/>
            <person name="Curwen V."/>
            <person name="Dana A."/>
            <person name="Delcher A."/>
            <person name="Dew I."/>
            <person name="Evans C.A."/>
            <person name="Flanigan M."/>
            <person name="Grundschober-Freimoser A."/>
            <person name="Friedli L."/>
            <person name="Gu Z."/>
            <person name="Guan P."/>
            <person name="Guigo R."/>
            <person name="Hillenmeyer M.E."/>
            <person name="Hladun S.L."/>
            <person name="Hogan J.R."/>
            <person name="Hong Y.S."/>
            <person name="Hoover J."/>
            <person name="Jaillon O."/>
            <person name="Ke Z."/>
            <person name="Kodira C.D."/>
            <person name="Kokoza E."/>
            <person name="Koutsos A."/>
            <person name="Letunic I."/>
            <person name="Levitsky A.A."/>
            <person name="Liang Y."/>
            <person name="Lin J.-J."/>
            <person name="Lobo N.F."/>
            <person name="Lopez J.R."/>
            <person name="Malek J.A."/>
            <person name="McIntosh T.C."/>
            <person name="Meister S."/>
            <person name="Miller J.R."/>
            <person name="Mobarry C."/>
            <person name="Mongin E."/>
            <person name="Murphy S.D."/>
            <person name="O'Brochta D.A."/>
            <person name="Pfannkoch C."/>
            <person name="Qi R."/>
            <person name="Regier M.A."/>
            <person name="Remington K."/>
            <person name="Shao H."/>
            <person name="Sharakhova M.V."/>
            <person name="Sitter C.D."/>
            <person name="Shetty J."/>
            <person name="Smith T.J."/>
            <person name="Strong R."/>
            <person name="Sun J."/>
            <person name="Thomasova D."/>
            <person name="Ton L.Q."/>
            <person name="Topalis P."/>
            <person name="Tu Z.J."/>
            <person name="Unger M.F."/>
            <person name="Walenz B."/>
            <person name="Wang A.H."/>
            <person name="Wang J."/>
            <person name="Wang M."/>
            <person name="Wang X."/>
            <person name="Woodford K.J."/>
            <person name="Wortman J.R."/>
            <person name="Wu M."/>
            <person name="Yao A."/>
            <person name="Zdobnov E.M."/>
            <person name="Zhang H."/>
            <person name="Zhao Q."/>
            <person name="Zhao S."/>
            <person name="Zhu S.C."/>
            <person name="Zhimulev I."/>
            <person name="Coluzzi M."/>
            <person name="della Torre A."/>
            <person name="Roth C.W."/>
            <person name="Louis C."/>
            <person name="Kalush F."/>
            <person name="Mural R.J."/>
            <person name="Myers E.W."/>
            <person name="Adams M.D."/>
            <person name="Smith H.O."/>
            <person name="Broder S."/>
            <person name="Gardner M.J."/>
            <person name="Fraser C.M."/>
            <person name="Birney E."/>
            <person name="Bork P."/>
            <person name="Brey P.T."/>
            <person name="Venter J.C."/>
            <person name="Weissenbach J."/>
            <person name="Kafatos F.C."/>
            <person name="Collins F.H."/>
            <person name="Hoffman S.L."/>
        </authorList>
    </citation>
    <scope>NUCLEOTIDE SEQUENCE [LARGE SCALE GENOMIC DNA]</scope>
    <source>
        <strain>PEST</strain>
    </source>
</reference>
<sequence length="235" mass="27662">MEEAIDDHVKLPQKRFYRQRAHSNPIADHSFDYPLLPELSNWNELYPNIGNRQVVFADIGCGYGGFLVTLGETFPDKLAIGMEIRVKVSDYVMDRIKALRQRHKGKYENIACIRTNAMKYLPNYFRKHQLEKLFFLYPDPHFKKAKHKWRIINPTLLSEYAYVLRPGGKIYTVTDVRELHEWMCKHIEEHPCFKRLPDTEAQEDILAPKLLDSSEEGQKVTRMSGEKFMAIFTRL</sequence>
<accession>Q7Q2P7</accession>
<evidence type="ECO:0000255" key="1">
    <source>
        <dbReference type="HAMAP-Rule" id="MF_03055"/>
    </source>
</evidence>
<dbReference type="EC" id="2.1.1.33" evidence="1"/>
<dbReference type="EMBL" id="AAAB01008968">
    <property type="protein sequence ID" value="EAA13331.4"/>
    <property type="molecule type" value="Genomic_DNA"/>
</dbReference>
<dbReference type="SMR" id="Q7Q2P7"/>
<dbReference type="FunCoup" id="Q7Q2P7">
    <property type="interactions" value="1099"/>
</dbReference>
<dbReference type="STRING" id="7165.Q7Q2P7"/>
<dbReference type="PaxDb" id="7165-AGAP004752-PA"/>
<dbReference type="EnsemblMetazoa" id="AGAP004752-RA">
    <property type="protein sequence ID" value="AGAP004752-PA"/>
    <property type="gene ID" value="AGAP004752"/>
</dbReference>
<dbReference type="GeneID" id="1278473"/>
<dbReference type="KEGG" id="aga:1278473"/>
<dbReference type="VEuPathDB" id="VectorBase:AGAMI1_006470"/>
<dbReference type="VEuPathDB" id="VectorBase:AGAP004752"/>
<dbReference type="eggNOG" id="KOG3115">
    <property type="taxonomic scope" value="Eukaryota"/>
</dbReference>
<dbReference type="HOGENOM" id="CLU_050910_3_0_1"/>
<dbReference type="InParanoid" id="Q7Q2P7"/>
<dbReference type="OMA" id="LPNYFAK"/>
<dbReference type="PhylomeDB" id="Q7Q2P7"/>
<dbReference type="UniPathway" id="UPA00989"/>
<dbReference type="Proteomes" id="UP000007062">
    <property type="component" value="Chromosome 2L"/>
</dbReference>
<dbReference type="GO" id="GO:0005634">
    <property type="term" value="C:nucleus"/>
    <property type="evidence" value="ECO:0007669"/>
    <property type="project" value="UniProtKB-SubCell"/>
</dbReference>
<dbReference type="GO" id="GO:0043527">
    <property type="term" value="C:tRNA methyltransferase complex"/>
    <property type="evidence" value="ECO:0000318"/>
    <property type="project" value="GO_Central"/>
</dbReference>
<dbReference type="GO" id="GO:0008176">
    <property type="term" value="F:tRNA (guanine(46)-N7)-methyltransferase activity"/>
    <property type="evidence" value="ECO:0000318"/>
    <property type="project" value="GO_Central"/>
</dbReference>
<dbReference type="GO" id="GO:0000049">
    <property type="term" value="F:tRNA binding"/>
    <property type="evidence" value="ECO:0007669"/>
    <property type="project" value="UniProtKB-UniRule"/>
</dbReference>
<dbReference type="GO" id="GO:0036265">
    <property type="term" value="P:RNA (guanine-N7)-methylation"/>
    <property type="evidence" value="ECO:0000318"/>
    <property type="project" value="GO_Central"/>
</dbReference>
<dbReference type="GO" id="GO:0030488">
    <property type="term" value="P:tRNA methylation"/>
    <property type="evidence" value="ECO:0000318"/>
    <property type="project" value="GO_Central"/>
</dbReference>
<dbReference type="CDD" id="cd02440">
    <property type="entry name" value="AdoMet_MTases"/>
    <property type="match status" value="1"/>
</dbReference>
<dbReference type="FunFam" id="3.40.50.150:FF:000060">
    <property type="entry name" value="tRNA (guanine-N(7)-)-methyltransferase"/>
    <property type="match status" value="1"/>
</dbReference>
<dbReference type="Gene3D" id="3.40.50.150">
    <property type="entry name" value="Vaccinia Virus protein VP39"/>
    <property type="match status" value="1"/>
</dbReference>
<dbReference type="HAMAP" id="MF_03055">
    <property type="entry name" value="tRNA_methyltr_TrmB_euk"/>
    <property type="match status" value="1"/>
</dbReference>
<dbReference type="InterPro" id="IPR029063">
    <property type="entry name" value="SAM-dependent_MTases_sf"/>
</dbReference>
<dbReference type="InterPro" id="IPR025763">
    <property type="entry name" value="Trm8_euk"/>
</dbReference>
<dbReference type="InterPro" id="IPR003358">
    <property type="entry name" value="tRNA_(Gua-N-7)_MeTrfase_Trmb"/>
</dbReference>
<dbReference type="NCBIfam" id="TIGR00091">
    <property type="entry name" value="tRNA (guanosine(46)-N7)-methyltransferase TrmB"/>
    <property type="match status" value="1"/>
</dbReference>
<dbReference type="PANTHER" id="PTHR23417">
    <property type="entry name" value="3-DEOXY-D-MANNO-OCTULOSONIC-ACID TRANSFERASE/TRNA GUANINE-N 7 - -METHYLTRANSFERASE"/>
    <property type="match status" value="1"/>
</dbReference>
<dbReference type="PANTHER" id="PTHR23417:SF16">
    <property type="entry name" value="TRNA (GUANINE-N(7)-)-METHYLTRANSFERASE"/>
    <property type="match status" value="1"/>
</dbReference>
<dbReference type="Pfam" id="PF02390">
    <property type="entry name" value="Methyltransf_4"/>
    <property type="match status" value="1"/>
</dbReference>
<dbReference type="SUPFAM" id="SSF53335">
    <property type="entry name" value="S-adenosyl-L-methionine-dependent methyltransferases"/>
    <property type="match status" value="1"/>
</dbReference>
<dbReference type="PROSITE" id="PS51625">
    <property type="entry name" value="SAM_MT_TRMB"/>
    <property type="match status" value="1"/>
</dbReference>